<name>SYP_SALPB</name>
<dbReference type="EC" id="6.1.1.15" evidence="1"/>
<dbReference type="EMBL" id="CP000886">
    <property type="protein sequence ID" value="ABX65749.1"/>
    <property type="molecule type" value="Genomic_DNA"/>
</dbReference>
<dbReference type="RefSeq" id="WP_001260683.1">
    <property type="nucleotide sequence ID" value="NC_010102.1"/>
</dbReference>
<dbReference type="SMR" id="A9N0U7"/>
<dbReference type="KEGG" id="spq:SPAB_00308"/>
<dbReference type="PATRIC" id="fig|1016998.12.peg.294"/>
<dbReference type="HOGENOM" id="CLU_016739_0_0_6"/>
<dbReference type="BioCyc" id="SENT1016998:SPAB_RS01250-MONOMER"/>
<dbReference type="Proteomes" id="UP000008556">
    <property type="component" value="Chromosome"/>
</dbReference>
<dbReference type="GO" id="GO:0005829">
    <property type="term" value="C:cytosol"/>
    <property type="evidence" value="ECO:0007669"/>
    <property type="project" value="TreeGrafter"/>
</dbReference>
<dbReference type="GO" id="GO:0002161">
    <property type="term" value="F:aminoacyl-tRNA deacylase activity"/>
    <property type="evidence" value="ECO:0007669"/>
    <property type="project" value="InterPro"/>
</dbReference>
<dbReference type="GO" id="GO:0005524">
    <property type="term" value="F:ATP binding"/>
    <property type="evidence" value="ECO:0007669"/>
    <property type="project" value="UniProtKB-UniRule"/>
</dbReference>
<dbReference type="GO" id="GO:0004827">
    <property type="term" value="F:proline-tRNA ligase activity"/>
    <property type="evidence" value="ECO:0007669"/>
    <property type="project" value="UniProtKB-UniRule"/>
</dbReference>
<dbReference type="GO" id="GO:0006433">
    <property type="term" value="P:prolyl-tRNA aminoacylation"/>
    <property type="evidence" value="ECO:0007669"/>
    <property type="project" value="UniProtKB-UniRule"/>
</dbReference>
<dbReference type="CDD" id="cd04334">
    <property type="entry name" value="ProRS-INS"/>
    <property type="match status" value="1"/>
</dbReference>
<dbReference type="CDD" id="cd00861">
    <property type="entry name" value="ProRS_anticodon_short"/>
    <property type="match status" value="1"/>
</dbReference>
<dbReference type="CDD" id="cd00779">
    <property type="entry name" value="ProRS_core_prok"/>
    <property type="match status" value="1"/>
</dbReference>
<dbReference type="FunFam" id="3.30.930.10:FF:000012">
    <property type="entry name" value="Proline--tRNA ligase"/>
    <property type="match status" value="1"/>
</dbReference>
<dbReference type="FunFam" id="3.30.930.10:FF:000097">
    <property type="entry name" value="Proline--tRNA ligase"/>
    <property type="match status" value="1"/>
</dbReference>
<dbReference type="FunFam" id="3.40.50.800:FF:000006">
    <property type="entry name" value="Proline--tRNA ligase"/>
    <property type="match status" value="1"/>
</dbReference>
<dbReference type="FunFam" id="3.90.960.10:FF:000001">
    <property type="entry name" value="Proline--tRNA ligase"/>
    <property type="match status" value="1"/>
</dbReference>
<dbReference type="Gene3D" id="3.40.50.800">
    <property type="entry name" value="Anticodon-binding domain"/>
    <property type="match status" value="1"/>
</dbReference>
<dbReference type="Gene3D" id="3.30.930.10">
    <property type="entry name" value="Bira Bifunctional Protein, Domain 2"/>
    <property type="match status" value="2"/>
</dbReference>
<dbReference type="Gene3D" id="3.90.960.10">
    <property type="entry name" value="YbaK/aminoacyl-tRNA synthetase-associated domain"/>
    <property type="match status" value="1"/>
</dbReference>
<dbReference type="HAMAP" id="MF_01569">
    <property type="entry name" value="Pro_tRNA_synth_type1"/>
    <property type="match status" value="1"/>
</dbReference>
<dbReference type="InterPro" id="IPR002314">
    <property type="entry name" value="aa-tRNA-synt_IIb"/>
</dbReference>
<dbReference type="InterPro" id="IPR006195">
    <property type="entry name" value="aa-tRNA-synth_II"/>
</dbReference>
<dbReference type="InterPro" id="IPR045864">
    <property type="entry name" value="aa-tRNA-synth_II/BPL/LPL"/>
</dbReference>
<dbReference type="InterPro" id="IPR004154">
    <property type="entry name" value="Anticodon-bd"/>
</dbReference>
<dbReference type="InterPro" id="IPR036621">
    <property type="entry name" value="Anticodon-bd_dom_sf"/>
</dbReference>
<dbReference type="InterPro" id="IPR002316">
    <property type="entry name" value="Pro-tRNA-ligase_IIa"/>
</dbReference>
<dbReference type="InterPro" id="IPR004500">
    <property type="entry name" value="Pro-tRNA-synth_IIa_bac-type"/>
</dbReference>
<dbReference type="InterPro" id="IPR023717">
    <property type="entry name" value="Pro-tRNA-Synthase_IIa_type1"/>
</dbReference>
<dbReference type="InterPro" id="IPR050062">
    <property type="entry name" value="Pro-tRNA_synthetase"/>
</dbReference>
<dbReference type="InterPro" id="IPR044140">
    <property type="entry name" value="ProRS_anticodon_short"/>
</dbReference>
<dbReference type="InterPro" id="IPR033730">
    <property type="entry name" value="ProRS_core_prok"/>
</dbReference>
<dbReference type="InterPro" id="IPR036754">
    <property type="entry name" value="YbaK/aa-tRNA-synt-asso_dom_sf"/>
</dbReference>
<dbReference type="InterPro" id="IPR007214">
    <property type="entry name" value="YbaK/aa-tRNA-synth-assoc-dom"/>
</dbReference>
<dbReference type="NCBIfam" id="NF006625">
    <property type="entry name" value="PRK09194.1"/>
    <property type="match status" value="1"/>
</dbReference>
<dbReference type="NCBIfam" id="TIGR00409">
    <property type="entry name" value="proS_fam_II"/>
    <property type="match status" value="1"/>
</dbReference>
<dbReference type="PANTHER" id="PTHR42753">
    <property type="entry name" value="MITOCHONDRIAL RIBOSOME PROTEIN L39/PROLYL-TRNA LIGASE FAMILY MEMBER"/>
    <property type="match status" value="1"/>
</dbReference>
<dbReference type="PANTHER" id="PTHR42753:SF2">
    <property type="entry name" value="PROLINE--TRNA LIGASE"/>
    <property type="match status" value="1"/>
</dbReference>
<dbReference type="Pfam" id="PF03129">
    <property type="entry name" value="HGTP_anticodon"/>
    <property type="match status" value="1"/>
</dbReference>
<dbReference type="Pfam" id="PF00587">
    <property type="entry name" value="tRNA-synt_2b"/>
    <property type="match status" value="1"/>
</dbReference>
<dbReference type="Pfam" id="PF04073">
    <property type="entry name" value="tRNA_edit"/>
    <property type="match status" value="1"/>
</dbReference>
<dbReference type="PIRSF" id="PIRSF001535">
    <property type="entry name" value="ProRS_1"/>
    <property type="match status" value="1"/>
</dbReference>
<dbReference type="PRINTS" id="PR01046">
    <property type="entry name" value="TRNASYNTHPRO"/>
</dbReference>
<dbReference type="SUPFAM" id="SSF52954">
    <property type="entry name" value="Class II aaRS ABD-related"/>
    <property type="match status" value="1"/>
</dbReference>
<dbReference type="SUPFAM" id="SSF55681">
    <property type="entry name" value="Class II aaRS and biotin synthetases"/>
    <property type="match status" value="1"/>
</dbReference>
<dbReference type="SUPFAM" id="SSF55826">
    <property type="entry name" value="YbaK/ProRS associated domain"/>
    <property type="match status" value="1"/>
</dbReference>
<dbReference type="PROSITE" id="PS50862">
    <property type="entry name" value="AA_TRNA_LIGASE_II"/>
    <property type="match status" value="1"/>
</dbReference>
<protein>
    <recommendedName>
        <fullName evidence="1">Proline--tRNA ligase</fullName>
        <ecNumber evidence="1">6.1.1.15</ecNumber>
    </recommendedName>
    <alternativeName>
        <fullName evidence="1">Prolyl-tRNA synthetase</fullName>
        <shortName evidence="1">ProRS</shortName>
    </alternativeName>
</protein>
<accession>A9N0U7</accession>
<keyword id="KW-0030">Aminoacyl-tRNA synthetase</keyword>
<keyword id="KW-0067">ATP-binding</keyword>
<keyword id="KW-0963">Cytoplasm</keyword>
<keyword id="KW-0436">Ligase</keyword>
<keyword id="KW-0547">Nucleotide-binding</keyword>
<keyword id="KW-0648">Protein biosynthesis</keyword>
<organism>
    <name type="scientific">Salmonella paratyphi B (strain ATCC BAA-1250 / SPB7)</name>
    <dbReference type="NCBI Taxonomy" id="1016998"/>
    <lineage>
        <taxon>Bacteria</taxon>
        <taxon>Pseudomonadati</taxon>
        <taxon>Pseudomonadota</taxon>
        <taxon>Gammaproteobacteria</taxon>
        <taxon>Enterobacterales</taxon>
        <taxon>Enterobacteriaceae</taxon>
        <taxon>Salmonella</taxon>
    </lineage>
</organism>
<evidence type="ECO:0000255" key="1">
    <source>
        <dbReference type="HAMAP-Rule" id="MF_01569"/>
    </source>
</evidence>
<reference key="1">
    <citation type="submission" date="2007-11" db="EMBL/GenBank/DDBJ databases">
        <authorList>
            <consortium name="The Salmonella enterica serovar Paratyphi B Genome Sequencing Project"/>
            <person name="McClelland M."/>
            <person name="Sanderson E.K."/>
            <person name="Porwollik S."/>
            <person name="Spieth J."/>
            <person name="Clifton W.S."/>
            <person name="Fulton R."/>
            <person name="Cordes M."/>
            <person name="Wollam A."/>
            <person name="Shah N."/>
            <person name="Pepin K."/>
            <person name="Bhonagiri V."/>
            <person name="Nash W."/>
            <person name="Johnson M."/>
            <person name="Thiruvilangam P."/>
            <person name="Wilson R."/>
        </authorList>
    </citation>
    <scope>NUCLEOTIDE SEQUENCE [LARGE SCALE GENOMIC DNA]</scope>
    <source>
        <strain>ATCC BAA-1250 / SPB7</strain>
    </source>
</reference>
<gene>
    <name evidence="1" type="primary">proS</name>
    <name type="ordered locus">SPAB_00308</name>
</gene>
<sequence length="572" mass="63540">MRTSQYLLSTLKETPADAEVISHQLMLRAGMIRKLASGLYTWLPTGLRVLKKVENIVREEMNNAGAIEVSMPVVQPADLWQESGRWEQYGPELLRFVDRGERPFVLGPTHEEVITDLVRNELSSYKQLPLNFFQIQTKFRDEVRPRFGVMRSREFLMKDAYSFHTSQESLQETYDAMYAAYSRIFSRMGLDFRAVQADTGSIGGNASHEFQVLAQSGEDDIVFSDVSDYAANIELAEAIAPQTPRAAATQEMTLVDTPNAKTIAELVEQFNLPIEKTVKTLLVKAVKDSKSPLVALLVRGDHELNEVKAEKLPHVASPLTFATEEEIRAVINAGPGSLGPVNMPIPVIIDRTVAAMSDFAAGANIDGKHYFGINWDRDVATPVVADIRNVVAGDPSPDGQGTLLIKRGIEVGHIFQLGTKYSEALKASVQGEDGRNQILTMGCYGIGVTRVVAAAIEQNFDERGIVWPDAIAPFQVAILPMNMHKSFRVQELAEKLYSELRAQGIEVLMDDRKERPGVMFADMELIGIPHTIVIGDRNLDNDDIEYKYRRSGEKSLIKTGDIVDYLVKAIKG</sequence>
<proteinExistence type="inferred from homology"/>
<feature type="chain" id="PRO_1000087851" description="Proline--tRNA ligase">
    <location>
        <begin position="1"/>
        <end position="572"/>
    </location>
</feature>
<comment type="function">
    <text evidence="1">Catalyzes the attachment of proline to tRNA(Pro) in a two-step reaction: proline is first activated by ATP to form Pro-AMP and then transferred to the acceptor end of tRNA(Pro). As ProRS can inadvertently accommodate and process non-cognate amino acids such as alanine and cysteine, to avoid such errors it has two additional distinct editing activities against alanine. One activity is designated as 'pretransfer' editing and involves the tRNA(Pro)-independent hydrolysis of activated Ala-AMP. The other activity is designated 'posttransfer' editing and involves deacylation of mischarged Ala-tRNA(Pro). The misacylated Cys-tRNA(Pro) is not edited by ProRS.</text>
</comment>
<comment type="catalytic activity">
    <reaction evidence="1">
        <text>tRNA(Pro) + L-proline + ATP = L-prolyl-tRNA(Pro) + AMP + diphosphate</text>
        <dbReference type="Rhea" id="RHEA:14305"/>
        <dbReference type="Rhea" id="RHEA-COMP:9700"/>
        <dbReference type="Rhea" id="RHEA-COMP:9702"/>
        <dbReference type="ChEBI" id="CHEBI:30616"/>
        <dbReference type="ChEBI" id="CHEBI:33019"/>
        <dbReference type="ChEBI" id="CHEBI:60039"/>
        <dbReference type="ChEBI" id="CHEBI:78442"/>
        <dbReference type="ChEBI" id="CHEBI:78532"/>
        <dbReference type="ChEBI" id="CHEBI:456215"/>
        <dbReference type="EC" id="6.1.1.15"/>
    </reaction>
</comment>
<comment type="subunit">
    <text evidence="1">Homodimer.</text>
</comment>
<comment type="subcellular location">
    <subcellularLocation>
        <location evidence="1">Cytoplasm</location>
    </subcellularLocation>
</comment>
<comment type="domain">
    <text evidence="1">Consists of three domains: the N-terminal catalytic domain, the editing domain and the C-terminal anticodon-binding domain.</text>
</comment>
<comment type="similarity">
    <text evidence="1">Belongs to the class-II aminoacyl-tRNA synthetase family. ProS type 1 subfamily.</text>
</comment>